<name>PRMA_HALHL</name>
<dbReference type="EC" id="2.1.1.-" evidence="1"/>
<dbReference type="EMBL" id="CP000544">
    <property type="protein sequence ID" value="ABM62767.1"/>
    <property type="molecule type" value="Genomic_DNA"/>
</dbReference>
<dbReference type="RefSeq" id="WP_011814789.1">
    <property type="nucleotide sequence ID" value="NC_008789.1"/>
</dbReference>
<dbReference type="SMR" id="A1WYK5"/>
<dbReference type="STRING" id="349124.Hhal_2003"/>
<dbReference type="KEGG" id="hha:Hhal_2003"/>
<dbReference type="eggNOG" id="COG2264">
    <property type="taxonomic scope" value="Bacteria"/>
</dbReference>
<dbReference type="HOGENOM" id="CLU_049382_4_1_6"/>
<dbReference type="OrthoDB" id="9785995at2"/>
<dbReference type="Proteomes" id="UP000000647">
    <property type="component" value="Chromosome"/>
</dbReference>
<dbReference type="GO" id="GO:0005829">
    <property type="term" value="C:cytosol"/>
    <property type="evidence" value="ECO:0007669"/>
    <property type="project" value="TreeGrafter"/>
</dbReference>
<dbReference type="GO" id="GO:0016279">
    <property type="term" value="F:protein-lysine N-methyltransferase activity"/>
    <property type="evidence" value="ECO:0007669"/>
    <property type="project" value="TreeGrafter"/>
</dbReference>
<dbReference type="GO" id="GO:0032259">
    <property type="term" value="P:methylation"/>
    <property type="evidence" value="ECO:0007669"/>
    <property type="project" value="UniProtKB-KW"/>
</dbReference>
<dbReference type="Gene3D" id="3.40.50.150">
    <property type="entry name" value="Vaccinia Virus protein VP39"/>
    <property type="match status" value="1"/>
</dbReference>
<dbReference type="HAMAP" id="MF_00735">
    <property type="entry name" value="Methyltr_PrmA"/>
    <property type="match status" value="1"/>
</dbReference>
<dbReference type="InterPro" id="IPR050078">
    <property type="entry name" value="Ribosomal_L11_MeTrfase_PrmA"/>
</dbReference>
<dbReference type="InterPro" id="IPR004498">
    <property type="entry name" value="Ribosomal_PrmA_MeTrfase"/>
</dbReference>
<dbReference type="InterPro" id="IPR029063">
    <property type="entry name" value="SAM-dependent_MTases_sf"/>
</dbReference>
<dbReference type="NCBIfam" id="TIGR00406">
    <property type="entry name" value="prmA"/>
    <property type="match status" value="1"/>
</dbReference>
<dbReference type="PANTHER" id="PTHR43648">
    <property type="entry name" value="ELECTRON TRANSFER FLAVOPROTEIN BETA SUBUNIT LYSINE METHYLTRANSFERASE"/>
    <property type="match status" value="1"/>
</dbReference>
<dbReference type="PANTHER" id="PTHR43648:SF1">
    <property type="entry name" value="ELECTRON TRANSFER FLAVOPROTEIN BETA SUBUNIT LYSINE METHYLTRANSFERASE"/>
    <property type="match status" value="1"/>
</dbReference>
<dbReference type="Pfam" id="PF06325">
    <property type="entry name" value="PrmA"/>
    <property type="match status" value="1"/>
</dbReference>
<dbReference type="PIRSF" id="PIRSF000401">
    <property type="entry name" value="RPL11_MTase"/>
    <property type="match status" value="1"/>
</dbReference>
<dbReference type="SUPFAM" id="SSF53335">
    <property type="entry name" value="S-adenosyl-L-methionine-dependent methyltransferases"/>
    <property type="match status" value="1"/>
</dbReference>
<evidence type="ECO:0000255" key="1">
    <source>
        <dbReference type="HAMAP-Rule" id="MF_00735"/>
    </source>
</evidence>
<reference key="1">
    <citation type="submission" date="2006-12" db="EMBL/GenBank/DDBJ databases">
        <title>Complete sequence of Halorhodospira halophila SL1.</title>
        <authorList>
            <consortium name="US DOE Joint Genome Institute"/>
            <person name="Copeland A."/>
            <person name="Lucas S."/>
            <person name="Lapidus A."/>
            <person name="Barry K."/>
            <person name="Detter J.C."/>
            <person name="Glavina del Rio T."/>
            <person name="Hammon N."/>
            <person name="Israni S."/>
            <person name="Dalin E."/>
            <person name="Tice H."/>
            <person name="Pitluck S."/>
            <person name="Saunders E."/>
            <person name="Brettin T."/>
            <person name="Bruce D."/>
            <person name="Han C."/>
            <person name="Tapia R."/>
            <person name="Schmutz J."/>
            <person name="Larimer F."/>
            <person name="Land M."/>
            <person name="Hauser L."/>
            <person name="Kyrpides N."/>
            <person name="Mikhailova N."/>
            <person name="Hoff W."/>
            <person name="Richardson P."/>
        </authorList>
    </citation>
    <scope>NUCLEOTIDE SEQUENCE [LARGE SCALE GENOMIC DNA]</scope>
    <source>
        <strain>DSM 244 / SL1</strain>
    </source>
</reference>
<accession>A1WYK5</accession>
<comment type="function">
    <text evidence="1">Methylates ribosomal protein L11.</text>
</comment>
<comment type="catalytic activity">
    <reaction evidence="1">
        <text>L-lysyl-[protein] + 3 S-adenosyl-L-methionine = N(6),N(6),N(6)-trimethyl-L-lysyl-[protein] + 3 S-adenosyl-L-homocysteine + 3 H(+)</text>
        <dbReference type="Rhea" id="RHEA:54192"/>
        <dbReference type="Rhea" id="RHEA-COMP:9752"/>
        <dbReference type="Rhea" id="RHEA-COMP:13826"/>
        <dbReference type="ChEBI" id="CHEBI:15378"/>
        <dbReference type="ChEBI" id="CHEBI:29969"/>
        <dbReference type="ChEBI" id="CHEBI:57856"/>
        <dbReference type="ChEBI" id="CHEBI:59789"/>
        <dbReference type="ChEBI" id="CHEBI:61961"/>
    </reaction>
</comment>
<comment type="subcellular location">
    <subcellularLocation>
        <location evidence="1">Cytoplasm</location>
    </subcellularLocation>
</comment>
<comment type="similarity">
    <text evidence="1">Belongs to the methyltransferase superfamily. PrmA family.</text>
</comment>
<feature type="chain" id="PRO_1000192633" description="Ribosomal protein L11 methyltransferase">
    <location>
        <begin position="1"/>
        <end position="293"/>
    </location>
</feature>
<feature type="binding site" evidence="1">
    <location>
        <position position="145"/>
    </location>
    <ligand>
        <name>S-adenosyl-L-methionine</name>
        <dbReference type="ChEBI" id="CHEBI:59789"/>
    </ligand>
</feature>
<feature type="binding site" evidence="1">
    <location>
        <position position="166"/>
    </location>
    <ligand>
        <name>S-adenosyl-L-methionine</name>
        <dbReference type="ChEBI" id="CHEBI:59789"/>
    </ligand>
</feature>
<feature type="binding site" evidence="1">
    <location>
        <position position="188"/>
    </location>
    <ligand>
        <name>S-adenosyl-L-methionine</name>
        <dbReference type="ChEBI" id="CHEBI:59789"/>
    </ligand>
</feature>
<feature type="binding site" evidence="1">
    <location>
        <position position="229"/>
    </location>
    <ligand>
        <name>S-adenosyl-L-methionine</name>
        <dbReference type="ChEBI" id="CHEBI:59789"/>
    </ligand>
</feature>
<gene>
    <name evidence="1" type="primary">prmA</name>
    <name type="ordered locus">Hhal_2003</name>
</gene>
<sequence length="293" mass="31158">MAQLQVTLEVAAGDLDAVDGALELAGALSQTYQADDGTVLLEPGVGEHPLWEQVRVDALFPPETDPDALHTLLAGQLGERLRGWQAETLEDRAWEREWLDHFRPMAFGERLWIVPTGAEPELPAGAVPIHLDPGLAFGTGTHETTALCLEWLDGEPIAGRNGLDYGAGSGILAVAAVRLGAACCMAVDNDPQAVVASRENAERNGVAEDVPSYAVDQRPAYCADFLVANILASTLVDLADELRDGVRVGGRLALSGILRGQEQQVMDAFQGGIAWDAPRCCGDWVLVSGTRTA</sequence>
<proteinExistence type="inferred from homology"/>
<protein>
    <recommendedName>
        <fullName evidence="1">Ribosomal protein L11 methyltransferase</fullName>
        <shortName evidence="1">L11 Mtase</shortName>
        <ecNumber evidence="1">2.1.1.-</ecNumber>
    </recommendedName>
</protein>
<organism>
    <name type="scientific">Halorhodospira halophila (strain DSM 244 / SL1)</name>
    <name type="common">Ectothiorhodospira halophila (strain DSM 244 / SL1)</name>
    <dbReference type="NCBI Taxonomy" id="349124"/>
    <lineage>
        <taxon>Bacteria</taxon>
        <taxon>Pseudomonadati</taxon>
        <taxon>Pseudomonadota</taxon>
        <taxon>Gammaproteobacteria</taxon>
        <taxon>Chromatiales</taxon>
        <taxon>Ectothiorhodospiraceae</taxon>
        <taxon>Halorhodospira</taxon>
    </lineage>
</organism>
<keyword id="KW-0963">Cytoplasm</keyword>
<keyword id="KW-0489">Methyltransferase</keyword>
<keyword id="KW-1185">Reference proteome</keyword>
<keyword id="KW-0949">S-adenosyl-L-methionine</keyword>
<keyword id="KW-0808">Transferase</keyword>